<keyword id="KW-0312">Gluconeogenesis</keyword>
<keyword id="KW-0324">Glycolysis</keyword>
<keyword id="KW-0413">Isomerase</keyword>
<keyword id="KW-1185">Reference proteome</keyword>
<proteinExistence type="inferred from homology"/>
<sequence>MYKIVLLRHGESTWNKENRFTGWTDVDLTELGVGEARAAGQLLKREGYSFDLAFTSVLKRANKTLNIVLEELDALWLPVEHSWRLNERHYGALQGLNKAETAAKFGDDQVLVWRRSYDIPPPALEEGDERLNYDDPRYGSLPRARFPRTECLADTVARVVPYWETVIVPQILSGRRILIAAHGNSLRALIKYLDGISDGDIVGLNIPTAQPLVYELDVNLKPVKSYYLADEDTIRAAQAAVAGQGKAKG</sequence>
<accession>A1K9B9</accession>
<gene>
    <name evidence="1" type="primary">gpmA</name>
    <name type="ordered locus">azo2808</name>
</gene>
<name>GPMA_AZOSB</name>
<protein>
    <recommendedName>
        <fullName evidence="1">2,3-bisphosphoglycerate-dependent phosphoglycerate mutase</fullName>
        <shortName evidence="1">BPG-dependent PGAM</shortName>
        <shortName evidence="1">PGAM</shortName>
        <shortName evidence="1">Phosphoglyceromutase</shortName>
        <shortName evidence="1">dPGM</shortName>
        <ecNumber evidence="1">5.4.2.11</ecNumber>
    </recommendedName>
</protein>
<comment type="function">
    <text evidence="1">Catalyzes the interconversion of 2-phosphoglycerate and 3-phosphoglycerate.</text>
</comment>
<comment type="catalytic activity">
    <reaction evidence="1">
        <text>(2R)-2-phosphoglycerate = (2R)-3-phosphoglycerate</text>
        <dbReference type="Rhea" id="RHEA:15901"/>
        <dbReference type="ChEBI" id="CHEBI:58272"/>
        <dbReference type="ChEBI" id="CHEBI:58289"/>
        <dbReference type="EC" id="5.4.2.11"/>
    </reaction>
</comment>
<comment type="pathway">
    <text evidence="1">Carbohydrate degradation; glycolysis; pyruvate from D-glyceraldehyde 3-phosphate: step 3/5.</text>
</comment>
<comment type="subunit">
    <text evidence="1">Homodimer.</text>
</comment>
<comment type="similarity">
    <text evidence="1">Belongs to the phosphoglycerate mutase family. BPG-dependent PGAM subfamily.</text>
</comment>
<dbReference type="EC" id="5.4.2.11" evidence="1"/>
<dbReference type="EMBL" id="AM406670">
    <property type="protein sequence ID" value="CAL95424.1"/>
    <property type="molecule type" value="Genomic_DNA"/>
</dbReference>
<dbReference type="RefSeq" id="WP_011766534.1">
    <property type="nucleotide sequence ID" value="NC_008702.1"/>
</dbReference>
<dbReference type="SMR" id="A1K9B9"/>
<dbReference type="STRING" id="62928.azo2808"/>
<dbReference type="KEGG" id="aoa:dqs_2947"/>
<dbReference type="KEGG" id="azo:azo2808"/>
<dbReference type="eggNOG" id="COG0588">
    <property type="taxonomic scope" value="Bacteria"/>
</dbReference>
<dbReference type="HOGENOM" id="CLU_033323_1_1_4"/>
<dbReference type="OrthoDB" id="9781415at2"/>
<dbReference type="UniPathway" id="UPA00109">
    <property type="reaction ID" value="UER00186"/>
</dbReference>
<dbReference type="Proteomes" id="UP000002588">
    <property type="component" value="Chromosome"/>
</dbReference>
<dbReference type="GO" id="GO:0004619">
    <property type="term" value="F:phosphoglycerate mutase activity"/>
    <property type="evidence" value="ECO:0007669"/>
    <property type="project" value="UniProtKB-EC"/>
</dbReference>
<dbReference type="GO" id="GO:0006094">
    <property type="term" value="P:gluconeogenesis"/>
    <property type="evidence" value="ECO:0007669"/>
    <property type="project" value="UniProtKB-UniRule"/>
</dbReference>
<dbReference type="GO" id="GO:0006096">
    <property type="term" value="P:glycolytic process"/>
    <property type="evidence" value="ECO:0007669"/>
    <property type="project" value="UniProtKB-UniRule"/>
</dbReference>
<dbReference type="CDD" id="cd07067">
    <property type="entry name" value="HP_PGM_like"/>
    <property type="match status" value="1"/>
</dbReference>
<dbReference type="FunFam" id="3.40.50.1240:FF:000003">
    <property type="entry name" value="2,3-bisphosphoglycerate-dependent phosphoglycerate mutase"/>
    <property type="match status" value="1"/>
</dbReference>
<dbReference type="Gene3D" id="3.40.50.1240">
    <property type="entry name" value="Phosphoglycerate mutase-like"/>
    <property type="match status" value="1"/>
</dbReference>
<dbReference type="HAMAP" id="MF_01039">
    <property type="entry name" value="PGAM_GpmA"/>
    <property type="match status" value="1"/>
</dbReference>
<dbReference type="InterPro" id="IPR013078">
    <property type="entry name" value="His_Pase_superF_clade-1"/>
</dbReference>
<dbReference type="InterPro" id="IPR029033">
    <property type="entry name" value="His_PPase_superfam"/>
</dbReference>
<dbReference type="InterPro" id="IPR001345">
    <property type="entry name" value="PG/BPGM_mutase_AS"/>
</dbReference>
<dbReference type="InterPro" id="IPR005952">
    <property type="entry name" value="Phosphogly_mut1"/>
</dbReference>
<dbReference type="NCBIfam" id="TIGR01258">
    <property type="entry name" value="pgm_1"/>
    <property type="match status" value="1"/>
</dbReference>
<dbReference type="NCBIfam" id="NF010713">
    <property type="entry name" value="PRK14115.1"/>
    <property type="match status" value="1"/>
</dbReference>
<dbReference type="PANTHER" id="PTHR11931">
    <property type="entry name" value="PHOSPHOGLYCERATE MUTASE"/>
    <property type="match status" value="1"/>
</dbReference>
<dbReference type="Pfam" id="PF00300">
    <property type="entry name" value="His_Phos_1"/>
    <property type="match status" value="2"/>
</dbReference>
<dbReference type="PIRSF" id="PIRSF000709">
    <property type="entry name" value="6PFK_2-Ptase"/>
    <property type="match status" value="1"/>
</dbReference>
<dbReference type="SMART" id="SM00855">
    <property type="entry name" value="PGAM"/>
    <property type="match status" value="1"/>
</dbReference>
<dbReference type="SUPFAM" id="SSF53254">
    <property type="entry name" value="Phosphoglycerate mutase-like"/>
    <property type="match status" value="1"/>
</dbReference>
<dbReference type="PROSITE" id="PS00175">
    <property type="entry name" value="PG_MUTASE"/>
    <property type="match status" value="1"/>
</dbReference>
<evidence type="ECO:0000255" key="1">
    <source>
        <dbReference type="HAMAP-Rule" id="MF_01039"/>
    </source>
</evidence>
<reference key="1">
    <citation type="journal article" date="2006" name="Nat. Biotechnol.">
        <title>Complete genome of the mutualistic, N2-fixing grass endophyte Azoarcus sp. strain BH72.</title>
        <authorList>
            <person name="Krause A."/>
            <person name="Ramakumar A."/>
            <person name="Bartels D."/>
            <person name="Battistoni F."/>
            <person name="Bekel T."/>
            <person name="Boch J."/>
            <person name="Boehm M."/>
            <person name="Friedrich F."/>
            <person name="Hurek T."/>
            <person name="Krause L."/>
            <person name="Linke B."/>
            <person name="McHardy A.C."/>
            <person name="Sarkar A."/>
            <person name="Schneiker S."/>
            <person name="Syed A.A."/>
            <person name="Thauer R."/>
            <person name="Vorhoelter F.-J."/>
            <person name="Weidner S."/>
            <person name="Puehler A."/>
            <person name="Reinhold-Hurek B."/>
            <person name="Kaiser O."/>
            <person name="Goesmann A."/>
        </authorList>
    </citation>
    <scope>NUCLEOTIDE SEQUENCE [LARGE SCALE GENOMIC DNA]</scope>
    <source>
        <strain>BH72</strain>
    </source>
</reference>
<feature type="chain" id="PRO_1000064028" description="2,3-bisphosphoglycerate-dependent phosphoglycerate mutase">
    <location>
        <begin position="1"/>
        <end position="249"/>
    </location>
</feature>
<feature type="active site" description="Tele-phosphohistidine intermediate" evidence="1">
    <location>
        <position position="9"/>
    </location>
</feature>
<feature type="active site" description="Proton donor/acceptor" evidence="1">
    <location>
        <position position="87"/>
    </location>
</feature>
<feature type="binding site" evidence="1">
    <location>
        <begin position="8"/>
        <end position="15"/>
    </location>
    <ligand>
        <name>substrate</name>
    </ligand>
</feature>
<feature type="binding site" evidence="1">
    <location>
        <begin position="21"/>
        <end position="22"/>
    </location>
    <ligand>
        <name>substrate</name>
    </ligand>
</feature>
<feature type="binding site" evidence="1">
    <location>
        <position position="60"/>
    </location>
    <ligand>
        <name>substrate</name>
    </ligand>
</feature>
<feature type="binding site" evidence="1">
    <location>
        <begin position="87"/>
        <end position="90"/>
    </location>
    <ligand>
        <name>substrate</name>
    </ligand>
</feature>
<feature type="binding site" evidence="1">
    <location>
        <position position="98"/>
    </location>
    <ligand>
        <name>substrate</name>
    </ligand>
</feature>
<feature type="binding site" evidence="1">
    <location>
        <begin position="114"/>
        <end position="115"/>
    </location>
    <ligand>
        <name>substrate</name>
    </ligand>
</feature>
<feature type="binding site" evidence="1">
    <location>
        <begin position="183"/>
        <end position="184"/>
    </location>
    <ligand>
        <name>substrate</name>
    </ligand>
</feature>
<feature type="site" description="Transition state stabilizer" evidence="1">
    <location>
        <position position="182"/>
    </location>
</feature>
<organism>
    <name type="scientific">Azoarcus sp. (strain BH72)</name>
    <dbReference type="NCBI Taxonomy" id="418699"/>
    <lineage>
        <taxon>Bacteria</taxon>
        <taxon>Pseudomonadati</taxon>
        <taxon>Pseudomonadota</taxon>
        <taxon>Betaproteobacteria</taxon>
        <taxon>Rhodocyclales</taxon>
        <taxon>Zoogloeaceae</taxon>
        <taxon>Azoarcus</taxon>
    </lineage>
</organism>